<sequence>MAGHMLMPLRRRPWTCRACLQRLQQPRRSLETAASPSSQSDVYDYAPTNHSTQKKSNDETLRRVFDSQPFWREFSQRSATQSKPTGLVQNQYLTNPDGFRAFANVSLQRCQAIVAKVLAASTLEEYRDMARDLDRLSDLLCRVIDLSDFIRVIHPDPRVQEAATQAYALMFEYMNVLNTTTGLNDQLKKAASNPDVTSYWSEEEKIVAQILIKDFSNSAIHMPPNERQRFVNLSNDISQLGSNFVNSAEPAKSQVVVGANSLRGLDPILVQQIRRWNRTASVPTTGMIPRLALRSVHDEGVRREVYLATRTSSSRQLHRLEELLSKRAELAQLSGHASFGHMTLSDKMAKSPEAVSNFLTALVGSNREYVQEELSKLQAMKGGSPLQPWDHAYYVHQRVLQYSQSRRSRELSAVPEFFSLGTVMQGLSRLFDRLYGVRLVPQETAAGETWNPDVRRLDVVDEAERHIAVIYCDLFSRPNKHPNPAHFTLRCAREISSEEVAECATMDHSAHPNDGMATAVDPQSKTLRQLPTIALVCDFAEPPATGAGRPSLLSEHSVRTLFHEMGHALHSILGQTRLQSISGTRCATDFAELPSVLMERFATEPAVLSMYARHWQTDQPLSESMMLSMEKDRLAHGSIYGAVENEAQILMALVDQAYHSIPADKAGQIDSTAIYHQVSSAHSTLPDPTDSRPPTSWQGFFGHLYGYGATYYSYIFDRAIANKIWEDVFQAGKAAVDREAGERYKNEVLRWGGGRNGWDCVAGVLGSANAANANGRLAEGGDEAMREVGRWGLGRDGVSG</sequence>
<comment type="function">
    <text evidence="1">Cleaves proteins, imported into the mitochondrion, to their mature size. While most mitochondrial precursor proteins are processed to the mature form in one step by mitochondrial processing peptidase (MPP), the sequential cleavage by MIP of an octapeptide after initial processing by MPP is a required step for a subgroup of nuclear-encoded precursor proteins destined for the matrix or the inner membrane (By similarity).</text>
</comment>
<comment type="catalytic activity">
    <reaction>
        <text>Release of an N-terminal octapeptide as second stage of processing of some proteins imported into the mitochondrion.</text>
        <dbReference type="EC" id="3.4.24.59"/>
    </reaction>
</comment>
<comment type="cofactor">
    <cofactor evidence="1">
        <name>Zn(2+)</name>
        <dbReference type="ChEBI" id="CHEBI:29105"/>
    </cofactor>
    <text evidence="1">Binds 1 zinc ion.</text>
</comment>
<comment type="subcellular location">
    <subcellularLocation>
        <location evidence="1">Mitochondrion matrix</location>
    </subcellularLocation>
</comment>
<comment type="similarity">
    <text evidence="5">Belongs to the peptidase M3 family.</text>
</comment>
<name>PMIP_ASPOR</name>
<keyword id="KW-0378">Hydrolase</keyword>
<keyword id="KW-0479">Metal-binding</keyword>
<keyword id="KW-0482">Metalloprotease</keyword>
<keyword id="KW-0496">Mitochondrion</keyword>
<keyword id="KW-0645">Protease</keyword>
<keyword id="KW-1185">Reference proteome</keyword>
<keyword id="KW-0809">Transit peptide</keyword>
<keyword id="KW-0862">Zinc</keyword>
<accession>Q2UN31</accession>
<gene>
    <name type="primary">oct1</name>
    <name type="ORF">AO090001000525</name>
</gene>
<dbReference type="EC" id="3.4.24.59"/>
<dbReference type="EMBL" id="BA000050">
    <property type="protein sequence ID" value="BAE57034.1"/>
    <property type="molecule type" value="Genomic_DNA"/>
</dbReference>
<dbReference type="RefSeq" id="XP_001819036.1">
    <property type="nucleotide sequence ID" value="XM_001818984.1"/>
</dbReference>
<dbReference type="SMR" id="Q2UN31"/>
<dbReference type="STRING" id="510516.Q2UN31"/>
<dbReference type="EnsemblFungi" id="BAE57034">
    <property type="protein sequence ID" value="BAE57034"/>
    <property type="gene ID" value="AO090001000525"/>
</dbReference>
<dbReference type="GeneID" id="5991007"/>
<dbReference type="KEGG" id="aor:AO090001000525"/>
<dbReference type="VEuPathDB" id="FungiDB:AO090001000525"/>
<dbReference type="HOGENOM" id="CLU_001805_0_0_1"/>
<dbReference type="OMA" id="ALMFEYM"/>
<dbReference type="OrthoDB" id="66216at5052"/>
<dbReference type="Proteomes" id="UP000006564">
    <property type="component" value="Chromosome 2"/>
</dbReference>
<dbReference type="GO" id="GO:0005759">
    <property type="term" value="C:mitochondrial matrix"/>
    <property type="evidence" value="ECO:0007669"/>
    <property type="project" value="UniProtKB-SubCell"/>
</dbReference>
<dbReference type="GO" id="GO:0046872">
    <property type="term" value="F:metal ion binding"/>
    <property type="evidence" value="ECO:0007669"/>
    <property type="project" value="UniProtKB-KW"/>
</dbReference>
<dbReference type="GO" id="GO:0004222">
    <property type="term" value="F:metalloendopeptidase activity"/>
    <property type="evidence" value="ECO:0007669"/>
    <property type="project" value="UniProtKB-EC"/>
</dbReference>
<dbReference type="GO" id="GO:0006518">
    <property type="term" value="P:peptide metabolic process"/>
    <property type="evidence" value="ECO:0007669"/>
    <property type="project" value="TreeGrafter"/>
</dbReference>
<dbReference type="GO" id="GO:0006627">
    <property type="term" value="P:protein processing involved in protein targeting to mitochondrion"/>
    <property type="evidence" value="ECO:0007669"/>
    <property type="project" value="TreeGrafter"/>
</dbReference>
<dbReference type="CDD" id="cd06457">
    <property type="entry name" value="M3A_MIP"/>
    <property type="match status" value="1"/>
</dbReference>
<dbReference type="FunFam" id="3.40.390.10:FF:000029">
    <property type="entry name" value="Mitochondrial intermediate peptidase 1"/>
    <property type="match status" value="1"/>
</dbReference>
<dbReference type="Gene3D" id="3.40.390.10">
    <property type="entry name" value="Collagenase (Catalytic Domain)"/>
    <property type="match status" value="1"/>
</dbReference>
<dbReference type="Gene3D" id="1.10.1370.10">
    <property type="entry name" value="Neurolysin, domain 3"/>
    <property type="match status" value="1"/>
</dbReference>
<dbReference type="InterPro" id="IPR033851">
    <property type="entry name" value="M3A_MIP"/>
</dbReference>
<dbReference type="InterPro" id="IPR024079">
    <property type="entry name" value="MetalloPept_cat_dom_sf"/>
</dbReference>
<dbReference type="InterPro" id="IPR024077">
    <property type="entry name" value="Neurolysin/TOP_dom2"/>
</dbReference>
<dbReference type="InterPro" id="IPR045090">
    <property type="entry name" value="Pept_M3A_M3B"/>
</dbReference>
<dbReference type="InterPro" id="IPR001567">
    <property type="entry name" value="Pept_M3A_M3B_dom"/>
</dbReference>
<dbReference type="PANTHER" id="PTHR11804:SF79">
    <property type="entry name" value="MITOCHONDRIAL INTERMEDIATE PEPTIDASE"/>
    <property type="match status" value="1"/>
</dbReference>
<dbReference type="PANTHER" id="PTHR11804">
    <property type="entry name" value="PROTEASE M3 THIMET OLIGOPEPTIDASE-RELATED"/>
    <property type="match status" value="1"/>
</dbReference>
<dbReference type="Pfam" id="PF01432">
    <property type="entry name" value="Peptidase_M3"/>
    <property type="match status" value="1"/>
</dbReference>
<dbReference type="SUPFAM" id="SSF55486">
    <property type="entry name" value="Metalloproteases ('zincins'), catalytic domain"/>
    <property type="match status" value="1"/>
</dbReference>
<dbReference type="PROSITE" id="PS00142">
    <property type="entry name" value="ZINC_PROTEASE"/>
    <property type="match status" value="1"/>
</dbReference>
<reference key="1">
    <citation type="journal article" date="2005" name="Nature">
        <title>Genome sequencing and analysis of Aspergillus oryzae.</title>
        <authorList>
            <person name="Machida M."/>
            <person name="Asai K."/>
            <person name="Sano M."/>
            <person name="Tanaka T."/>
            <person name="Kumagai T."/>
            <person name="Terai G."/>
            <person name="Kusumoto K."/>
            <person name="Arima T."/>
            <person name="Akita O."/>
            <person name="Kashiwagi Y."/>
            <person name="Abe K."/>
            <person name="Gomi K."/>
            <person name="Horiuchi H."/>
            <person name="Kitamoto K."/>
            <person name="Kobayashi T."/>
            <person name="Takeuchi M."/>
            <person name="Denning D.W."/>
            <person name="Galagan J.E."/>
            <person name="Nierman W.C."/>
            <person name="Yu J."/>
            <person name="Archer D.B."/>
            <person name="Bennett J.W."/>
            <person name="Bhatnagar D."/>
            <person name="Cleveland T.E."/>
            <person name="Fedorova N.D."/>
            <person name="Gotoh O."/>
            <person name="Horikawa H."/>
            <person name="Hosoyama A."/>
            <person name="Ichinomiya M."/>
            <person name="Igarashi R."/>
            <person name="Iwashita K."/>
            <person name="Juvvadi P.R."/>
            <person name="Kato M."/>
            <person name="Kato Y."/>
            <person name="Kin T."/>
            <person name="Kokubun A."/>
            <person name="Maeda H."/>
            <person name="Maeyama N."/>
            <person name="Maruyama J."/>
            <person name="Nagasaki H."/>
            <person name="Nakajima T."/>
            <person name="Oda K."/>
            <person name="Okada K."/>
            <person name="Paulsen I."/>
            <person name="Sakamoto K."/>
            <person name="Sawano T."/>
            <person name="Takahashi M."/>
            <person name="Takase K."/>
            <person name="Terabayashi Y."/>
            <person name="Wortman J.R."/>
            <person name="Yamada O."/>
            <person name="Yamagata Y."/>
            <person name="Anazawa H."/>
            <person name="Hata Y."/>
            <person name="Koide Y."/>
            <person name="Komori T."/>
            <person name="Koyama Y."/>
            <person name="Minetoki T."/>
            <person name="Suharnan S."/>
            <person name="Tanaka A."/>
            <person name="Isono K."/>
            <person name="Kuhara S."/>
            <person name="Ogasawara N."/>
            <person name="Kikuchi H."/>
        </authorList>
    </citation>
    <scope>NUCLEOTIDE SEQUENCE [LARGE SCALE GENOMIC DNA]</scope>
    <source>
        <strain>ATCC 42149 / RIB 40</strain>
    </source>
</reference>
<proteinExistence type="inferred from homology"/>
<organism>
    <name type="scientific">Aspergillus oryzae (strain ATCC 42149 / RIB 40)</name>
    <name type="common">Yellow koji mold</name>
    <dbReference type="NCBI Taxonomy" id="510516"/>
    <lineage>
        <taxon>Eukaryota</taxon>
        <taxon>Fungi</taxon>
        <taxon>Dikarya</taxon>
        <taxon>Ascomycota</taxon>
        <taxon>Pezizomycotina</taxon>
        <taxon>Eurotiomycetes</taxon>
        <taxon>Eurotiomycetidae</taxon>
        <taxon>Eurotiales</taxon>
        <taxon>Aspergillaceae</taxon>
        <taxon>Aspergillus</taxon>
        <taxon>Aspergillus subgen. Circumdati</taxon>
    </lineage>
</organism>
<feature type="transit peptide" description="Mitochondrion" evidence="2">
    <location>
        <begin position="1"/>
        <end position="23"/>
    </location>
</feature>
<feature type="chain" id="PRO_0000338573" description="Mitochondrial intermediate peptidase">
    <location>
        <begin position="24"/>
        <end position="800"/>
    </location>
</feature>
<feature type="region of interest" description="Disordered" evidence="4">
    <location>
        <begin position="27"/>
        <end position="59"/>
    </location>
</feature>
<feature type="compositionally biased region" description="Polar residues" evidence="4">
    <location>
        <begin position="27"/>
        <end position="41"/>
    </location>
</feature>
<feature type="active site" evidence="3">
    <location>
        <position position="564"/>
    </location>
</feature>
<feature type="binding site" evidence="3">
    <location>
        <position position="563"/>
    </location>
    <ligand>
        <name>Zn(2+)</name>
        <dbReference type="ChEBI" id="CHEBI:29105"/>
        <note>catalytic</note>
    </ligand>
</feature>
<feature type="binding site" evidence="3">
    <location>
        <position position="567"/>
    </location>
    <ligand>
        <name>Zn(2+)</name>
        <dbReference type="ChEBI" id="CHEBI:29105"/>
        <note>catalytic</note>
    </ligand>
</feature>
<feature type="binding site" evidence="3">
    <location>
        <position position="570"/>
    </location>
    <ligand>
        <name>Zn(2+)</name>
        <dbReference type="ChEBI" id="CHEBI:29105"/>
        <note>catalytic</note>
    </ligand>
</feature>
<evidence type="ECO:0000250" key="1"/>
<evidence type="ECO:0000255" key="2"/>
<evidence type="ECO:0000255" key="3">
    <source>
        <dbReference type="PROSITE-ProRule" id="PRU10095"/>
    </source>
</evidence>
<evidence type="ECO:0000256" key="4">
    <source>
        <dbReference type="SAM" id="MobiDB-lite"/>
    </source>
</evidence>
<evidence type="ECO:0000305" key="5"/>
<protein>
    <recommendedName>
        <fullName>Mitochondrial intermediate peptidase</fullName>
        <shortName>MIP</shortName>
        <ecNumber>3.4.24.59</ecNumber>
    </recommendedName>
    <alternativeName>
        <fullName>Octapeptidyl aminopeptidase</fullName>
    </alternativeName>
</protein>